<accession>C5C1C4</accession>
<name>GLPK_BEUC1</name>
<organism>
    <name type="scientific">Beutenbergia cavernae (strain ATCC BAA-8 / DSM 12333 / CCUG 43141 / JCM 11478 / NBRC 16432 / NCIMB 13614 / HKI 0122)</name>
    <dbReference type="NCBI Taxonomy" id="471853"/>
    <lineage>
        <taxon>Bacteria</taxon>
        <taxon>Bacillati</taxon>
        <taxon>Actinomycetota</taxon>
        <taxon>Actinomycetes</taxon>
        <taxon>Micrococcales</taxon>
        <taxon>Beutenbergiaceae</taxon>
        <taxon>Beutenbergia</taxon>
    </lineage>
</organism>
<comment type="function">
    <text evidence="1">Key enzyme in the regulation of glycerol uptake and metabolism. Catalyzes the phosphorylation of glycerol to yield sn-glycerol 3-phosphate.</text>
</comment>
<comment type="catalytic activity">
    <reaction evidence="1">
        <text>glycerol + ATP = sn-glycerol 3-phosphate + ADP + H(+)</text>
        <dbReference type="Rhea" id="RHEA:21644"/>
        <dbReference type="ChEBI" id="CHEBI:15378"/>
        <dbReference type="ChEBI" id="CHEBI:17754"/>
        <dbReference type="ChEBI" id="CHEBI:30616"/>
        <dbReference type="ChEBI" id="CHEBI:57597"/>
        <dbReference type="ChEBI" id="CHEBI:456216"/>
        <dbReference type="EC" id="2.7.1.30"/>
    </reaction>
</comment>
<comment type="activity regulation">
    <text evidence="1">Inhibited by fructose 1,6-bisphosphate (FBP).</text>
</comment>
<comment type="pathway">
    <text evidence="1">Polyol metabolism; glycerol degradation via glycerol kinase pathway; sn-glycerol 3-phosphate from glycerol: step 1/1.</text>
</comment>
<comment type="similarity">
    <text evidence="1">Belongs to the FGGY kinase family.</text>
</comment>
<keyword id="KW-0067">ATP-binding</keyword>
<keyword id="KW-0319">Glycerol metabolism</keyword>
<keyword id="KW-0418">Kinase</keyword>
<keyword id="KW-0547">Nucleotide-binding</keyword>
<keyword id="KW-1185">Reference proteome</keyword>
<keyword id="KW-0808">Transferase</keyword>
<feature type="chain" id="PRO_1000203946" description="Glycerol kinase">
    <location>
        <begin position="1"/>
        <end position="505"/>
    </location>
</feature>
<feature type="binding site" evidence="1">
    <location>
        <position position="12"/>
    </location>
    <ligand>
        <name>ADP</name>
        <dbReference type="ChEBI" id="CHEBI:456216"/>
    </ligand>
</feature>
<feature type="binding site" evidence="1">
    <location>
        <position position="12"/>
    </location>
    <ligand>
        <name>ATP</name>
        <dbReference type="ChEBI" id="CHEBI:30616"/>
    </ligand>
</feature>
<feature type="binding site" evidence="1">
    <location>
        <position position="12"/>
    </location>
    <ligand>
        <name>sn-glycerol 3-phosphate</name>
        <dbReference type="ChEBI" id="CHEBI:57597"/>
    </ligand>
</feature>
<feature type="binding site" evidence="1">
    <location>
        <position position="13"/>
    </location>
    <ligand>
        <name>ATP</name>
        <dbReference type="ChEBI" id="CHEBI:30616"/>
    </ligand>
</feature>
<feature type="binding site" evidence="1">
    <location>
        <position position="14"/>
    </location>
    <ligand>
        <name>ATP</name>
        <dbReference type="ChEBI" id="CHEBI:30616"/>
    </ligand>
</feature>
<feature type="binding site" evidence="1">
    <location>
        <position position="16"/>
    </location>
    <ligand>
        <name>ADP</name>
        <dbReference type="ChEBI" id="CHEBI:456216"/>
    </ligand>
</feature>
<feature type="binding site" evidence="1">
    <location>
        <position position="82"/>
    </location>
    <ligand>
        <name>glycerol</name>
        <dbReference type="ChEBI" id="CHEBI:17754"/>
    </ligand>
</feature>
<feature type="binding site" evidence="1">
    <location>
        <position position="82"/>
    </location>
    <ligand>
        <name>sn-glycerol 3-phosphate</name>
        <dbReference type="ChEBI" id="CHEBI:57597"/>
    </ligand>
</feature>
<feature type="binding site" evidence="1">
    <location>
        <position position="83"/>
    </location>
    <ligand>
        <name>glycerol</name>
        <dbReference type="ChEBI" id="CHEBI:17754"/>
    </ligand>
</feature>
<feature type="binding site" evidence="1">
    <location>
        <position position="83"/>
    </location>
    <ligand>
        <name>sn-glycerol 3-phosphate</name>
        <dbReference type="ChEBI" id="CHEBI:57597"/>
    </ligand>
</feature>
<feature type="binding site" evidence="1">
    <location>
        <position position="134"/>
    </location>
    <ligand>
        <name>glycerol</name>
        <dbReference type="ChEBI" id="CHEBI:17754"/>
    </ligand>
</feature>
<feature type="binding site" evidence="1">
    <location>
        <position position="134"/>
    </location>
    <ligand>
        <name>sn-glycerol 3-phosphate</name>
        <dbReference type="ChEBI" id="CHEBI:57597"/>
    </ligand>
</feature>
<feature type="binding site" evidence="1">
    <location>
        <position position="246"/>
    </location>
    <ligand>
        <name>glycerol</name>
        <dbReference type="ChEBI" id="CHEBI:17754"/>
    </ligand>
</feature>
<feature type="binding site" evidence="1">
    <location>
        <position position="246"/>
    </location>
    <ligand>
        <name>sn-glycerol 3-phosphate</name>
        <dbReference type="ChEBI" id="CHEBI:57597"/>
    </ligand>
</feature>
<feature type="binding site" evidence="1">
    <location>
        <position position="247"/>
    </location>
    <ligand>
        <name>glycerol</name>
        <dbReference type="ChEBI" id="CHEBI:17754"/>
    </ligand>
</feature>
<feature type="binding site" evidence="1">
    <location>
        <position position="268"/>
    </location>
    <ligand>
        <name>ADP</name>
        <dbReference type="ChEBI" id="CHEBI:456216"/>
    </ligand>
</feature>
<feature type="binding site" evidence="1">
    <location>
        <position position="268"/>
    </location>
    <ligand>
        <name>ATP</name>
        <dbReference type="ChEBI" id="CHEBI:30616"/>
    </ligand>
</feature>
<feature type="binding site" evidence="1">
    <location>
        <position position="312"/>
    </location>
    <ligand>
        <name>ADP</name>
        <dbReference type="ChEBI" id="CHEBI:456216"/>
    </ligand>
</feature>
<feature type="binding site" evidence="1">
    <location>
        <position position="312"/>
    </location>
    <ligand>
        <name>ATP</name>
        <dbReference type="ChEBI" id="CHEBI:30616"/>
    </ligand>
</feature>
<feature type="binding site" evidence="1">
    <location>
        <position position="316"/>
    </location>
    <ligand>
        <name>ATP</name>
        <dbReference type="ChEBI" id="CHEBI:30616"/>
    </ligand>
</feature>
<feature type="binding site" evidence="1">
    <location>
        <position position="413"/>
    </location>
    <ligand>
        <name>ADP</name>
        <dbReference type="ChEBI" id="CHEBI:456216"/>
    </ligand>
</feature>
<feature type="binding site" evidence="1">
    <location>
        <position position="413"/>
    </location>
    <ligand>
        <name>ATP</name>
        <dbReference type="ChEBI" id="CHEBI:30616"/>
    </ligand>
</feature>
<feature type="binding site" evidence="1">
    <location>
        <position position="417"/>
    </location>
    <ligand>
        <name>ADP</name>
        <dbReference type="ChEBI" id="CHEBI:456216"/>
    </ligand>
</feature>
<gene>
    <name evidence="1" type="primary">glpK</name>
    <name type="ordered locus">Bcav_3291</name>
</gene>
<reference key="1">
    <citation type="journal article" date="2009" name="Stand. Genomic Sci.">
        <title>Complete genome sequence of Beutenbergia cavernae type strain (HKI 0122).</title>
        <authorList>
            <person name="Land M."/>
            <person name="Pukall R."/>
            <person name="Abt B."/>
            <person name="Goker M."/>
            <person name="Rohde M."/>
            <person name="Glavina Del Rio T."/>
            <person name="Tice H."/>
            <person name="Copeland A."/>
            <person name="Cheng J.F."/>
            <person name="Lucas S."/>
            <person name="Chen F."/>
            <person name="Nolan M."/>
            <person name="Bruce D."/>
            <person name="Goodwin L."/>
            <person name="Pitluck S."/>
            <person name="Ivanova N."/>
            <person name="Mavromatis K."/>
            <person name="Ovchinnikova G."/>
            <person name="Pati A."/>
            <person name="Chen A."/>
            <person name="Palaniappan K."/>
            <person name="Hauser L."/>
            <person name="Chang Y.J."/>
            <person name="Jefferies C.C."/>
            <person name="Saunders E."/>
            <person name="Brettin T."/>
            <person name="Detter J.C."/>
            <person name="Han C."/>
            <person name="Chain P."/>
            <person name="Bristow J."/>
            <person name="Eisen J.A."/>
            <person name="Markowitz V."/>
            <person name="Hugenholtz P."/>
            <person name="Kyrpides N.C."/>
            <person name="Klenk H.P."/>
            <person name="Lapidus A."/>
        </authorList>
    </citation>
    <scope>NUCLEOTIDE SEQUENCE [LARGE SCALE GENOMIC DNA]</scope>
    <source>
        <strain>ATCC BAA-8 / DSM 12333 / CCUG 43141 / JCM 11478 / NBRC 16432 / NCIMB 13614 / HKI 0122</strain>
    </source>
</reference>
<evidence type="ECO:0000255" key="1">
    <source>
        <dbReference type="HAMAP-Rule" id="MF_00186"/>
    </source>
</evidence>
<sequence>MADYVLAIDQGTTSSRAIIFDHSGTIVATGQKEHEQIFPRAGWVEHDPEEIWTNVRDVVGQALGRASVRASNIAAIGITNQRETAVVWDRTTGKPVYNAIVWQDTRTQRIVEELGGSEGAEKYKARVGLPLATYFSGPKIKWILDNVDGAREAAERGDLLFGNTDTWVLWNMTGGVNGGVHVTDVTNASRTMLMDLDTLSWNPDIAADMGIPVSMLPEIRSSSEVYGKDREEGLLAGVPIAGILGDQQAATFGQACFEIGMAKNTYGTGNFMLMNTGTEQVASENGLLTTVCYKIGDQPQVYALEGSIAVTGSLVQWLRDNLKVISTAPEIENLALTVEDNGGAYFVPAFSGLFAPYWRADARGALVGLTRYVSLGHIARAALEATAFQSAEVLDAMKADSGVDLTELKVDGGMVANEVLMQFQADILGVDVVRPKVAETTALGAAYAAGIAVGFWNGEQDVIDNWAEDKRWTPQMDRGDRDRLYRNWKKAVTKTFDWVDDDVEN</sequence>
<protein>
    <recommendedName>
        <fullName evidence="1">Glycerol kinase</fullName>
        <ecNumber evidence="1">2.7.1.30</ecNumber>
    </recommendedName>
    <alternativeName>
        <fullName evidence="1">ATP:glycerol 3-phosphotransferase</fullName>
    </alternativeName>
    <alternativeName>
        <fullName evidence="1">Glycerokinase</fullName>
        <shortName evidence="1">GK</shortName>
    </alternativeName>
</protein>
<proteinExistence type="inferred from homology"/>
<dbReference type="EC" id="2.7.1.30" evidence="1"/>
<dbReference type="EMBL" id="CP001618">
    <property type="protein sequence ID" value="ACQ81534.1"/>
    <property type="molecule type" value="Genomic_DNA"/>
</dbReference>
<dbReference type="RefSeq" id="WP_015883771.1">
    <property type="nucleotide sequence ID" value="NC_012669.1"/>
</dbReference>
<dbReference type="SMR" id="C5C1C4"/>
<dbReference type="STRING" id="471853.Bcav_3291"/>
<dbReference type="KEGG" id="bcv:Bcav_3291"/>
<dbReference type="eggNOG" id="COG0554">
    <property type="taxonomic scope" value="Bacteria"/>
</dbReference>
<dbReference type="HOGENOM" id="CLU_009281_2_3_11"/>
<dbReference type="OrthoDB" id="9805576at2"/>
<dbReference type="UniPathway" id="UPA00618">
    <property type="reaction ID" value="UER00672"/>
</dbReference>
<dbReference type="Proteomes" id="UP000007962">
    <property type="component" value="Chromosome"/>
</dbReference>
<dbReference type="GO" id="GO:0005829">
    <property type="term" value="C:cytosol"/>
    <property type="evidence" value="ECO:0007669"/>
    <property type="project" value="TreeGrafter"/>
</dbReference>
<dbReference type="GO" id="GO:0005524">
    <property type="term" value="F:ATP binding"/>
    <property type="evidence" value="ECO:0007669"/>
    <property type="project" value="UniProtKB-UniRule"/>
</dbReference>
<dbReference type="GO" id="GO:0004370">
    <property type="term" value="F:glycerol kinase activity"/>
    <property type="evidence" value="ECO:0000250"/>
    <property type="project" value="UniProtKB"/>
</dbReference>
<dbReference type="GO" id="GO:0019563">
    <property type="term" value="P:glycerol catabolic process"/>
    <property type="evidence" value="ECO:0007669"/>
    <property type="project" value="UniProtKB-UniRule"/>
</dbReference>
<dbReference type="GO" id="GO:0006071">
    <property type="term" value="P:glycerol metabolic process"/>
    <property type="evidence" value="ECO:0000250"/>
    <property type="project" value="UniProtKB"/>
</dbReference>
<dbReference type="GO" id="GO:0006072">
    <property type="term" value="P:glycerol-3-phosphate metabolic process"/>
    <property type="evidence" value="ECO:0007669"/>
    <property type="project" value="InterPro"/>
</dbReference>
<dbReference type="CDD" id="cd07769">
    <property type="entry name" value="ASKHA_NBD_FGGY_GK"/>
    <property type="match status" value="1"/>
</dbReference>
<dbReference type="FunFam" id="3.30.420.40:FF:000007">
    <property type="entry name" value="Glycerol kinase"/>
    <property type="match status" value="1"/>
</dbReference>
<dbReference type="FunFam" id="3.30.420.40:FF:000008">
    <property type="entry name" value="Glycerol kinase"/>
    <property type="match status" value="1"/>
</dbReference>
<dbReference type="Gene3D" id="3.30.420.40">
    <property type="match status" value="2"/>
</dbReference>
<dbReference type="HAMAP" id="MF_00186">
    <property type="entry name" value="Glycerol_kin"/>
    <property type="match status" value="1"/>
</dbReference>
<dbReference type="InterPro" id="IPR043129">
    <property type="entry name" value="ATPase_NBD"/>
</dbReference>
<dbReference type="InterPro" id="IPR000577">
    <property type="entry name" value="Carb_kinase_FGGY"/>
</dbReference>
<dbReference type="InterPro" id="IPR018483">
    <property type="entry name" value="Carb_kinase_FGGY_CS"/>
</dbReference>
<dbReference type="InterPro" id="IPR018485">
    <property type="entry name" value="FGGY_C"/>
</dbReference>
<dbReference type="InterPro" id="IPR018484">
    <property type="entry name" value="FGGY_N"/>
</dbReference>
<dbReference type="InterPro" id="IPR005999">
    <property type="entry name" value="Glycerol_kin"/>
</dbReference>
<dbReference type="NCBIfam" id="TIGR01311">
    <property type="entry name" value="glycerol_kin"/>
    <property type="match status" value="1"/>
</dbReference>
<dbReference type="NCBIfam" id="NF000756">
    <property type="entry name" value="PRK00047.1"/>
    <property type="match status" value="1"/>
</dbReference>
<dbReference type="PANTHER" id="PTHR10196:SF69">
    <property type="entry name" value="GLYCEROL KINASE"/>
    <property type="match status" value="1"/>
</dbReference>
<dbReference type="PANTHER" id="PTHR10196">
    <property type="entry name" value="SUGAR KINASE"/>
    <property type="match status" value="1"/>
</dbReference>
<dbReference type="Pfam" id="PF02782">
    <property type="entry name" value="FGGY_C"/>
    <property type="match status" value="1"/>
</dbReference>
<dbReference type="Pfam" id="PF00370">
    <property type="entry name" value="FGGY_N"/>
    <property type="match status" value="1"/>
</dbReference>
<dbReference type="PIRSF" id="PIRSF000538">
    <property type="entry name" value="GlpK"/>
    <property type="match status" value="1"/>
</dbReference>
<dbReference type="SUPFAM" id="SSF53067">
    <property type="entry name" value="Actin-like ATPase domain"/>
    <property type="match status" value="2"/>
</dbReference>
<dbReference type="PROSITE" id="PS00933">
    <property type="entry name" value="FGGY_KINASES_1"/>
    <property type="match status" value="1"/>
</dbReference>
<dbReference type="PROSITE" id="PS00445">
    <property type="entry name" value="FGGY_KINASES_2"/>
    <property type="match status" value="1"/>
</dbReference>